<comment type="function">
    <text evidence="1">Specifically methylates position 2 of adenine 2503 in 23S rRNA and position 2 of adenine 37 in tRNAs.</text>
</comment>
<comment type="catalytic activity">
    <reaction evidence="1">
        <text>adenosine(2503) in 23S rRNA + 2 reduced [2Fe-2S]-[ferredoxin] + 2 S-adenosyl-L-methionine = 2-methyladenosine(2503) in 23S rRNA + 5'-deoxyadenosine + L-methionine + 2 oxidized [2Fe-2S]-[ferredoxin] + S-adenosyl-L-homocysteine</text>
        <dbReference type="Rhea" id="RHEA:42916"/>
        <dbReference type="Rhea" id="RHEA-COMP:10000"/>
        <dbReference type="Rhea" id="RHEA-COMP:10001"/>
        <dbReference type="Rhea" id="RHEA-COMP:10152"/>
        <dbReference type="Rhea" id="RHEA-COMP:10282"/>
        <dbReference type="ChEBI" id="CHEBI:17319"/>
        <dbReference type="ChEBI" id="CHEBI:33737"/>
        <dbReference type="ChEBI" id="CHEBI:33738"/>
        <dbReference type="ChEBI" id="CHEBI:57844"/>
        <dbReference type="ChEBI" id="CHEBI:57856"/>
        <dbReference type="ChEBI" id="CHEBI:59789"/>
        <dbReference type="ChEBI" id="CHEBI:74411"/>
        <dbReference type="ChEBI" id="CHEBI:74497"/>
        <dbReference type="EC" id="2.1.1.192"/>
    </reaction>
</comment>
<comment type="catalytic activity">
    <reaction evidence="1">
        <text>adenosine(37) in tRNA + 2 reduced [2Fe-2S]-[ferredoxin] + 2 S-adenosyl-L-methionine = 2-methyladenosine(37) in tRNA + 5'-deoxyadenosine + L-methionine + 2 oxidized [2Fe-2S]-[ferredoxin] + S-adenosyl-L-homocysteine</text>
        <dbReference type="Rhea" id="RHEA:43332"/>
        <dbReference type="Rhea" id="RHEA-COMP:10000"/>
        <dbReference type="Rhea" id="RHEA-COMP:10001"/>
        <dbReference type="Rhea" id="RHEA-COMP:10162"/>
        <dbReference type="Rhea" id="RHEA-COMP:10485"/>
        <dbReference type="ChEBI" id="CHEBI:17319"/>
        <dbReference type="ChEBI" id="CHEBI:33737"/>
        <dbReference type="ChEBI" id="CHEBI:33738"/>
        <dbReference type="ChEBI" id="CHEBI:57844"/>
        <dbReference type="ChEBI" id="CHEBI:57856"/>
        <dbReference type="ChEBI" id="CHEBI:59789"/>
        <dbReference type="ChEBI" id="CHEBI:74411"/>
        <dbReference type="ChEBI" id="CHEBI:74497"/>
        <dbReference type="EC" id="2.1.1.192"/>
    </reaction>
</comment>
<comment type="cofactor">
    <cofactor evidence="1">
        <name>[4Fe-4S] cluster</name>
        <dbReference type="ChEBI" id="CHEBI:49883"/>
    </cofactor>
    <text evidence="1">Binds 1 [4Fe-4S] cluster. The cluster is coordinated with 3 cysteines and an exchangeable S-adenosyl-L-methionine.</text>
</comment>
<comment type="subcellular location">
    <subcellularLocation>
        <location evidence="1">Cytoplasm</location>
    </subcellularLocation>
</comment>
<comment type="miscellaneous">
    <text evidence="1">Reaction proceeds by a ping-pong mechanism involving intermediate methylation of a conserved cysteine residue.</text>
</comment>
<comment type="similarity">
    <text evidence="1">Belongs to the radical SAM superfamily. RlmN family.</text>
</comment>
<gene>
    <name evidence="1" type="primary">rlmN</name>
    <name type="ordered locus">MMAR_1830</name>
</gene>
<reference key="1">
    <citation type="journal article" date="2008" name="Genome Res.">
        <title>Insights from the complete genome sequence of Mycobacterium marinum on the evolution of Mycobacterium tuberculosis.</title>
        <authorList>
            <person name="Stinear T.P."/>
            <person name="Seemann T."/>
            <person name="Harrison P.F."/>
            <person name="Jenkin G.A."/>
            <person name="Davies J.K."/>
            <person name="Johnson P.D."/>
            <person name="Abdellah Z."/>
            <person name="Arrowsmith C."/>
            <person name="Chillingworth T."/>
            <person name="Churcher C."/>
            <person name="Clarke K."/>
            <person name="Cronin A."/>
            <person name="Davis P."/>
            <person name="Goodhead I."/>
            <person name="Holroyd N."/>
            <person name="Jagels K."/>
            <person name="Lord A."/>
            <person name="Moule S."/>
            <person name="Mungall K."/>
            <person name="Norbertczak H."/>
            <person name="Quail M.A."/>
            <person name="Rabbinowitsch E."/>
            <person name="Walker D."/>
            <person name="White B."/>
            <person name="Whitehead S."/>
            <person name="Small P.L."/>
            <person name="Brosch R."/>
            <person name="Ramakrishnan L."/>
            <person name="Fischbach M.A."/>
            <person name="Parkhill J."/>
            <person name="Cole S.T."/>
        </authorList>
    </citation>
    <scope>NUCLEOTIDE SEQUENCE [LARGE SCALE GENOMIC DNA]</scope>
    <source>
        <strain>ATCC BAA-535 / M</strain>
    </source>
</reference>
<evidence type="ECO:0000255" key="1">
    <source>
        <dbReference type="HAMAP-Rule" id="MF_01849"/>
    </source>
</evidence>
<evidence type="ECO:0000255" key="2">
    <source>
        <dbReference type="PROSITE-ProRule" id="PRU01266"/>
    </source>
</evidence>
<feature type="chain" id="PRO_0000350262" description="Probable dual-specificity RNA methyltransferase RlmN">
    <location>
        <begin position="1"/>
        <end position="364"/>
    </location>
</feature>
<feature type="domain" description="Radical SAM core" evidence="2">
    <location>
        <begin position="112"/>
        <end position="350"/>
    </location>
</feature>
<feature type="active site" description="Proton acceptor" evidence="1">
    <location>
        <position position="106"/>
    </location>
</feature>
<feature type="active site" description="S-methylcysteine intermediate" evidence="1">
    <location>
        <position position="356"/>
    </location>
</feature>
<feature type="binding site" evidence="1">
    <location>
        <position position="126"/>
    </location>
    <ligand>
        <name>[4Fe-4S] cluster</name>
        <dbReference type="ChEBI" id="CHEBI:49883"/>
        <note>4Fe-4S-S-AdoMet</note>
    </ligand>
</feature>
<feature type="binding site" evidence="1">
    <location>
        <position position="130"/>
    </location>
    <ligand>
        <name>[4Fe-4S] cluster</name>
        <dbReference type="ChEBI" id="CHEBI:49883"/>
        <note>4Fe-4S-S-AdoMet</note>
    </ligand>
</feature>
<feature type="binding site" evidence="1">
    <location>
        <position position="133"/>
    </location>
    <ligand>
        <name>[4Fe-4S] cluster</name>
        <dbReference type="ChEBI" id="CHEBI:49883"/>
        <note>4Fe-4S-S-AdoMet</note>
    </ligand>
</feature>
<feature type="binding site" evidence="1">
    <location>
        <begin position="177"/>
        <end position="178"/>
    </location>
    <ligand>
        <name>S-adenosyl-L-methionine</name>
        <dbReference type="ChEBI" id="CHEBI:59789"/>
    </ligand>
</feature>
<feature type="binding site" evidence="1">
    <location>
        <position position="211"/>
    </location>
    <ligand>
        <name>S-adenosyl-L-methionine</name>
        <dbReference type="ChEBI" id="CHEBI:59789"/>
    </ligand>
</feature>
<feature type="binding site" evidence="1">
    <location>
        <begin position="234"/>
        <end position="236"/>
    </location>
    <ligand>
        <name>S-adenosyl-L-methionine</name>
        <dbReference type="ChEBI" id="CHEBI:59789"/>
    </ligand>
</feature>
<feature type="binding site" evidence="1">
    <location>
        <position position="313"/>
    </location>
    <ligand>
        <name>S-adenosyl-L-methionine</name>
        <dbReference type="ChEBI" id="CHEBI:59789"/>
    </ligand>
</feature>
<feature type="disulfide bond" description="(transient)" evidence="1">
    <location>
        <begin position="119"/>
        <end position="356"/>
    </location>
</feature>
<proteinExistence type="inferred from homology"/>
<dbReference type="EC" id="2.1.1.192" evidence="1"/>
<dbReference type="EMBL" id="CP000854">
    <property type="protein sequence ID" value="ACC40279.1"/>
    <property type="molecule type" value="Genomic_DNA"/>
</dbReference>
<dbReference type="RefSeq" id="WP_012393628.1">
    <property type="nucleotide sequence ID" value="NC_010612.1"/>
</dbReference>
<dbReference type="SMR" id="B2HJP3"/>
<dbReference type="STRING" id="216594.MMAR_1830"/>
<dbReference type="KEGG" id="mmi:MMAR_1830"/>
<dbReference type="eggNOG" id="COG0820">
    <property type="taxonomic scope" value="Bacteria"/>
</dbReference>
<dbReference type="HOGENOM" id="CLU_029101_0_2_11"/>
<dbReference type="OrthoDB" id="9793973at2"/>
<dbReference type="Proteomes" id="UP000001190">
    <property type="component" value="Chromosome"/>
</dbReference>
<dbReference type="GO" id="GO:0005737">
    <property type="term" value="C:cytoplasm"/>
    <property type="evidence" value="ECO:0007669"/>
    <property type="project" value="UniProtKB-SubCell"/>
</dbReference>
<dbReference type="GO" id="GO:0051539">
    <property type="term" value="F:4 iron, 4 sulfur cluster binding"/>
    <property type="evidence" value="ECO:0007669"/>
    <property type="project" value="UniProtKB-UniRule"/>
</dbReference>
<dbReference type="GO" id="GO:0046872">
    <property type="term" value="F:metal ion binding"/>
    <property type="evidence" value="ECO:0007669"/>
    <property type="project" value="UniProtKB-KW"/>
</dbReference>
<dbReference type="GO" id="GO:0070040">
    <property type="term" value="F:rRNA (adenine(2503)-C2-)-methyltransferase activity"/>
    <property type="evidence" value="ECO:0007669"/>
    <property type="project" value="UniProtKB-UniRule"/>
</dbReference>
<dbReference type="GO" id="GO:0019843">
    <property type="term" value="F:rRNA binding"/>
    <property type="evidence" value="ECO:0007669"/>
    <property type="project" value="UniProtKB-UniRule"/>
</dbReference>
<dbReference type="GO" id="GO:0002935">
    <property type="term" value="F:tRNA (adenine(37)-C2)-methyltransferase activity"/>
    <property type="evidence" value="ECO:0007669"/>
    <property type="project" value="UniProtKB-UniRule"/>
</dbReference>
<dbReference type="GO" id="GO:0000049">
    <property type="term" value="F:tRNA binding"/>
    <property type="evidence" value="ECO:0007669"/>
    <property type="project" value="UniProtKB-UniRule"/>
</dbReference>
<dbReference type="GO" id="GO:0070475">
    <property type="term" value="P:rRNA base methylation"/>
    <property type="evidence" value="ECO:0007669"/>
    <property type="project" value="UniProtKB-UniRule"/>
</dbReference>
<dbReference type="GO" id="GO:0030488">
    <property type="term" value="P:tRNA methylation"/>
    <property type="evidence" value="ECO:0007669"/>
    <property type="project" value="UniProtKB-UniRule"/>
</dbReference>
<dbReference type="CDD" id="cd01335">
    <property type="entry name" value="Radical_SAM"/>
    <property type="match status" value="1"/>
</dbReference>
<dbReference type="FunFam" id="3.20.20.70:FF:000014">
    <property type="entry name" value="Probable dual-specificity RNA methyltransferase RlmN"/>
    <property type="match status" value="1"/>
</dbReference>
<dbReference type="Gene3D" id="1.10.150.530">
    <property type="match status" value="1"/>
</dbReference>
<dbReference type="Gene3D" id="3.20.20.70">
    <property type="entry name" value="Aldolase class I"/>
    <property type="match status" value="1"/>
</dbReference>
<dbReference type="HAMAP" id="MF_01849">
    <property type="entry name" value="RNA_methyltr_RlmN"/>
    <property type="match status" value="1"/>
</dbReference>
<dbReference type="InterPro" id="IPR013785">
    <property type="entry name" value="Aldolase_TIM"/>
</dbReference>
<dbReference type="InterPro" id="IPR006638">
    <property type="entry name" value="Elp3/MiaA/NifB-like_rSAM"/>
</dbReference>
<dbReference type="InterPro" id="IPR040072">
    <property type="entry name" value="Methyltransferase_A"/>
</dbReference>
<dbReference type="InterPro" id="IPR027492">
    <property type="entry name" value="RNA_MTrfase_RlmN"/>
</dbReference>
<dbReference type="InterPro" id="IPR004383">
    <property type="entry name" value="rRNA_lsu_MTrfase_RlmN/Cfr"/>
</dbReference>
<dbReference type="InterPro" id="IPR007197">
    <property type="entry name" value="rSAM"/>
</dbReference>
<dbReference type="NCBIfam" id="TIGR00048">
    <property type="entry name" value="rRNA_mod_RlmN"/>
    <property type="match status" value="1"/>
</dbReference>
<dbReference type="PANTHER" id="PTHR30544">
    <property type="entry name" value="23S RRNA METHYLTRANSFERASE"/>
    <property type="match status" value="1"/>
</dbReference>
<dbReference type="PANTHER" id="PTHR30544:SF5">
    <property type="entry name" value="RADICAL SAM CORE DOMAIN-CONTAINING PROTEIN"/>
    <property type="match status" value="1"/>
</dbReference>
<dbReference type="Pfam" id="PF04055">
    <property type="entry name" value="Radical_SAM"/>
    <property type="match status" value="1"/>
</dbReference>
<dbReference type="PIRSF" id="PIRSF006004">
    <property type="entry name" value="CHP00048"/>
    <property type="match status" value="1"/>
</dbReference>
<dbReference type="SFLD" id="SFLDF00275">
    <property type="entry name" value="adenosine_C2_methyltransferase"/>
    <property type="match status" value="1"/>
</dbReference>
<dbReference type="SFLD" id="SFLDS00029">
    <property type="entry name" value="Radical_SAM"/>
    <property type="match status" value="1"/>
</dbReference>
<dbReference type="SMART" id="SM00729">
    <property type="entry name" value="Elp3"/>
    <property type="match status" value="1"/>
</dbReference>
<dbReference type="SUPFAM" id="SSF102114">
    <property type="entry name" value="Radical SAM enzymes"/>
    <property type="match status" value="1"/>
</dbReference>
<dbReference type="PROSITE" id="PS51918">
    <property type="entry name" value="RADICAL_SAM"/>
    <property type="match status" value="1"/>
</dbReference>
<organism>
    <name type="scientific">Mycobacterium marinum (strain ATCC BAA-535 / M)</name>
    <dbReference type="NCBI Taxonomy" id="216594"/>
    <lineage>
        <taxon>Bacteria</taxon>
        <taxon>Bacillati</taxon>
        <taxon>Actinomycetota</taxon>
        <taxon>Actinomycetes</taxon>
        <taxon>Mycobacteriales</taxon>
        <taxon>Mycobacteriaceae</taxon>
        <taxon>Mycobacterium</taxon>
        <taxon>Mycobacterium ulcerans group</taxon>
    </lineage>
</organism>
<name>RLMN_MYCMM</name>
<accession>B2HJP3</accession>
<protein>
    <recommendedName>
        <fullName evidence="1">Probable dual-specificity RNA methyltransferase RlmN</fullName>
        <ecNumber evidence="1">2.1.1.192</ecNumber>
    </recommendedName>
    <alternativeName>
        <fullName evidence="1">23S rRNA (adenine(2503)-C(2))-methyltransferase</fullName>
    </alternativeName>
    <alternativeName>
        <fullName evidence="1">23S rRNA m2A2503 methyltransferase</fullName>
    </alternativeName>
    <alternativeName>
        <fullName evidence="1">Ribosomal RNA large subunit methyltransferase N</fullName>
    </alternativeName>
    <alternativeName>
        <fullName evidence="1">tRNA (adenine(37)-C(2))-methyltransferase</fullName>
    </alternativeName>
    <alternativeName>
        <fullName evidence="1">tRNA m2A37 methyltransferase</fullName>
    </alternativeName>
</protein>
<sequence>MAQELMFEEPRRGKPPRHLADFDAEGRASAVAALGLPPFRAKQLAHQYYGRLIADPRQMTDLPAAVREQIAETMFPNLLTAAREVTCDAGQTRKTLWRATDGVTLESVLMRYPQRNTVCISSQAGCGMACPFCATGQGGLTRNLSTAEILEQVRAAAAALRDEFGDRLSNVVFMGMGEPLANYARVLAAVRRITEPPPMGFGISARSVTVSTVGLAPAIRKLADERLGVTLALSLHAPDDELRDTLVPVNNRWKISEALEAAHYYAEVTGRRVSVEYALIREVNDQPWRADLLGKRLHRALGPLVHVNLIPLNPTPGSDWDASPKPVEREFVKRVRAQGVSCTVRDTRGREISAACGQLAAEGG</sequence>
<keyword id="KW-0004">4Fe-4S</keyword>
<keyword id="KW-0963">Cytoplasm</keyword>
<keyword id="KW-1015">Disulfide bond</keyword>
<keyword id="KW-0408">Iron</keyword>
<keyword id="KW-0411">Iron-sulfur</keyword>
<keyword id="KW-0479">Metal-binding</keyword>
<keyword id="KW-0489">Methyltransferase</keyword>
<keyword id="KW-1185">Reference proteome</keyword>
<keyword id="KW-0698">rRNA processing</keyword>
<keyword id="KW-0949">S-adenosyl-L-methionine</keyword>
<keyword id="KW-0808">Transferase</keyword>
<keyword id="KW-0819">tRNA processing</keyword>